<keyword id="KW-0067">ATP-binding</keyword>
<keyword id="KW-0436">Ligase</keyword>
<keyword id="KW-0547">Nucleotide-binding</keyword>
<keyword id="KW-0648">Protein biosynthesis</keyword>
<keyword id="KW-1185">Reference proteome</keyword>
<accession>Q8TM08</accession>
<gene>
    <name evidence="1" type="primary">gatE</name>
    <name type="ordered locus">MA_2862</name>
</gene>
<proteinExistence type="inferred from homology"/>
<sequence length="633" mass="70899">MEKYDYSELGLKAGLEIHQQLDSKEKLFCRCPTLIRDIGDSDFEFFRYLRATESEMGEKDRAAVEQTKIRRKYIYKAYDTTCLIENDEEPPRELNKEALDISLGVSKLFNMKPVDQMHVMRKIVVDGSNTSGFQRTAFLASDGYIETSEGRCGIDSLCVEEEAAQKIEEKGDSIVYSLDRLGIPLVEIATAPDIRSPRHAREVAEYIGMVLRSTGKVKRGLGTIRQDVNISIARGERVEIKGVQALDLIEDIVRREVERQLNLLFIRQELLERKAFVCEEIYDVTGLFMDTKSKVLQKGVKKGSILAALLKKFNRLVGKEVQPGRRLGTEFSDRAKTAGVGGLFHTDELPNYGITEKEVQAVKDAIGAGPEDAFVMVADEPEKARLAIEAVINRAKEAIEGIPEETRKALPDGNTAYMRPLPGAARMYPETDVPQIEISQEYFDSIKPPELLTKRAKRFASESGLNKELAEKVAYSRYLPLFEILLETYTKDANVNSTLIARTLVGIVPEIRRNGVETDNLTDEHFKGLFAAISNQEIAKEAIQDLLTALAKEPELTVQEAISKLGLSAFDPEEVENFIKQMVMEKGDFIKDKGPSALGPLMGIVMKEYRGTVDGKILSHMLKKEIDNFIGQG</sequence>
<protein>
    <recommendedName>
        <fullName evidence="1">Glutamyl-tRNA(Gln) amidotransferase subunit E</fullName>
        <shortName evidence="1">Glu-ADT subunit E</shortName>
        <ecNumber evidence="1">6.3.5.-</ecNumber>
    </recommendedName>
</protein>
<reference key="1">
    <citation type="journal article" date="2002" name="Genome Res.">
        <title>The genome of Methanosarcina acetivorans reveals extensive metabolic and physiological diversity.</title>
        <authorList>
            <person name="Galagan J.E."/>
            <person name="Nusbaum C."/>
            <person name="Roy A."/>
            <person name="Endrizzi M.G."/>
            <person name="Macdonald P."/>
            <person name="FitzHugh W."/>
            <person name="Calvo S."/>
            <person name="Engels R."/>
            <person name="Smirnov S."/>
            <person name="Atnoor D."/>
            <person name="Brown A."/>
            <person name="Allen N."/>
            <person name="Naylor J."/>
            <person name="Stange-Thomann N."/>
            <person name="DeArellano K."/>
            <person name="Johnson R."/>
            <person name="Linton L."/>
            <person name="McEwan P."/>
            <person name="McKernan K."/>
            <person name="Talamas J."/>
            <person name="Tirrell A."/>
            <person name="Ye W."/>
            <person name="Zimmer A."/>
            <person name="Barber R.D."/>
            <person name="Cann I."/>
            <person name="Graham D.E."/>
            <person name="Grahame D.A."/>
            <person name="Guss A.M."/>
            <person name="Hedderich R."/>
            <person name="Ingram-Smith C."/>
            <person name="Kuettner H.C."/>
            <person name="Krzycki J.A."/>
            <person name="Leigh J.A."/>
            <person name="Li W."/>
            <person name="Liu J."/>
            <person name="Mukhopadhyay B."/>
            <person name="Reeve J.N."/>
            <person name="Smith K."/>
            <person name="Springer T.A."/>
            <person name="Umayam L.A."/>
            <person name="White O."/>
            <person name="White R.H."/>
            <person name="de Macario E.C."/>
            <person name="Ferry J.G."/>
            <person name="Jarrell K.F."/>
            <person name="Jing H."/>
            <person name="Macario A.J.L."/>
            <person name="Paulsen I.T."/>
            <person name="Pritchett M."/>
            <person name="Sowers K.R."/>
            <person name="Swanson R.V."/>
            <person name="Zinder S.H."/>
            <person name="Lander E."/>
            <person name="Metcalf W.W."/>
            <person name="Birren B."/>
        </authorList>
    </citation>
    <scope>NUCLEOTIDE SEQUENCE [LARGE SCALE GENOMIC DNA]</scope>
    <source>
        <strain>ATCC 35395 / DSM 2834 / JCM 12185 / C2A</strain>
    </source>
</reference>
<feature type="chain" id="PRO_0000140071" description="Glutamyl-tRNA(Gln) amidotransferase subunit E">
    <location>
        <begin position="1"/>
        <end position="633"/>
    </location>
</feature>
<organism>
    <name type="scientific">Methanosarcina acetivorans (strain ATCC 35395 / DSM 2834 / JCM 12185 / C2A)</name>
    <dbReference type="NCBI Taxonomy" id="188937"/>
    <lineage>
        <taxon>Archaea</taxon>
        <taxon>Methanobacteriati</taxon>
        <taxon>Methanobacteriota</taxon>
        <taxon>Stenosarchaea group</taxon>
        <taxon>Methanomicrobia</taxon>
        <taxon>Methanosarcinales</taxon>
        <taxon>Methanosarcinaceae</taxon>
        <taxon>Methanosarcina</taxon>
    </lineage>
</organism>
<evidence type="ECO:0000255" key="1">
    <source>
        <dbReference type="HAMAP-Rule" id="MF_00588"/>
    </source>
</evidence>
<dbReference type="EC" id="6.3.5.-" evidence="1"/>
<dbReference type="EMBL" id="AE010299">
    <property type="protein sequence ID" value="AAM06241.1"/>
    <property type="molecule type" value="Genomic_DNA"/>
</dbReference>
<dbReference type="RefSeq" id="WP_011022814.1">
    <property type="nucleotide sequence ID" value="NC_003552.1"/>
</dbReference>
<dbReference type="SMR" id="Q8TM08"/>
<dbReference type="FunCoup" id="Q8TM08">
    <property type="interactions" value="22"/>
</dbReference>
<dbReference type="STRING" id="188937.MA_2862"/>
<dbReference type="EnsemblBacteria" id="AAM06241">
    <property type="protein sequence ID" value="AAM06241"/>
    <property type="gene ID" value="MA_2862"/>
</dbReference>
<dbReference type="GeneID" id="1474759"/>
<dbReference type="KEGG" id="mac:MA_2862"/>
<dbReference type="HOGENOM" id="CLU_030702_0_0_2"/>
<dbReference type="InParanoid" id="Q8TM08"/>
<dbReference type="OrthoDB" id="7316at2157"/>
<dbReference type="PhylomeDB" id="Q8TM08"/>
<dbReference type="Proteomes" id="UP000002487">
    <property type="component" value="Chromosome"/>
</dbReference>
<dbReference type="GO" id="GO:0005737">
    <property type="term" value="C:cytoplasm"/>
    <property type="evidence" value="ECO:0007669"/>
    <property type="project" value="InterPro"/>
</dbReference>
<dbReference type="GO" id="GO:0004812">
    <property type="term" value="F:aminoacyl-tRNA ligase activity"/>
    <property type="evidence" value="ECO:0007669"/>
    <property type="project" value="InterPro"/>
</dbReference>
<dbReference type="GO" id="GO:0005524">
    <property type="term" value="F:ATP binding"/>
    <property type="evidence" value="ECO:0007669"/>
    <property type="project" value="UniProtKB-KW"/>
</dbReference>
<dbReference type="GO" id="GO:0050567">
    <property type="term" value="F:glutaminyl-tRNA synthase (glutamine-hydrolyzing) activity"/>
    <property type="evidence" value="ECO:0000318"/>
    <property type="project" value="GO_Central"/>
</dbReference>
<dbReference type="GO" id="GO:0070681">
    <property type="term" value="P:glutaminyl-tRNAGln biosynthesis via transamidation"/>
    <property type="evidence" value="ECO:0000318"/>
    <property type="project" value="GO_Central"/>
</dbReference>
<dbReference type="GO" id="GO:0006412">
    <property type="term" value="P:translation"/>
    <property type="evidence" value="ECO:0007669"/>
    <property type="project" value="UniProtKB-UniRule"/>
</dbReference>
<dbReference type="FunFam" id="1.10.10.410:FF:000003">
    <property type="entry name" value="Glutamyl-tRNA(Gln) amidotransferase subunit E"/>
    <property type="match status" value="1"/>
</dbReference>
<dbReference type="FunFam" id="3.30.1360.30:FF:000003">
    <property type="entry name" value="Glutamyl-tRNA(Gln) amidotransferase subunit E"/>
    <property type="match status" value="1"/>
</dbReference>
<dbReference type="Gene3D" id="1.10.10.410">
    <property type="match status" value="1"/>
</dbReference>
<dbReference type="Gene3D" id="3.30.1360.30">
    <property type="entry name" value="GAD-like domain"/>
    <property type="match status" value="1"/>
</dbReference>
<dbReference type="Gene3D" id="1.10.150.380">
    <property type="entry name" value="GatB domain, N-terminal subdomain"/>
    <property type="match status" value="1"/>
</dbReference>
<dbReference type="HAMAP" id="MF_00588">
    <property type="entry name" value="GatE"/>
    <property type="match status" value="1"/>
</dbReference>
<dbReference type="InterPro" id="IPR017959">
    <property type="entry name" value="Asn/Gln-tRNA_amidoTrfase_suB/E"/>
</dbReference>
<dbReference type="InterPro" id="IPR006075">
    <property type="entry name" value="Asn/Gln-tRNA_Trfase_suB/E_cat"/>
</dbReference>
<dbReference type="InterPro" id="IPR018027">
    <property type="entry name" value="Asn/Gln_amidotransferase"/>
</dbReference>
<dbReference type="InterPro" id="IPR003789">
    <property type="entry name" value="Asn/Gln_tRNA_amidoTrase-B-like"/>
</dbReference>
<dbReference type="InterPro" id="IPR004115">
    <property type="entry name" value="GAD-like_sf"/>
</dbReference>
<dbReference type="InterPro" id="IPR029351">
    <property type="entry name" value="GAD_dom"/>
</dbReference>
<dbReference type="InterPro" id="IPR042114">
    <property type="entry name" value="GatB_C_1"/>
</dbReference>
<dbReference type="InterPro" id="IPR023168">
    <property type="entry name" value="GatB_Yqey_C_2"/>
</dbReference>
<dbReference type="InterPro" id="IPR004414">
    <property type="entry name" value="GatE"/>
</dbReference>
<dbReference type="InterPro" id="IPR017958">
    <property type="entry name" value="Gln-tRNA_amidoTrfase_suB_CS"/>
</dbReference>
<dbReference type="InterPro" id="IPR014746">
    <property type="entry name" value="Gln_synth/guanido_kin_cat_dom"/>
</dbReference>
<dbReference type="NCBIfam" id="TIGR00134">
    <property type="entry name" value="gatE_arch"/>
    <property type="match status" value="1"/>
</dbReference>
<dbReference type="NCBIfam" id="NF003107">
    <property type="entry name" value="PRK04028.1"/>
    <property type="match status" value="1"/>
</dbReference>
<dbReference type="PANTHER" id="PTHR11659">
    <property type="entry name" value="GLUTAMYL-TRNA GLN AMIDOTRANSFERASE SUBUNIT B MITOCHONDRIAL AND PROKARYOTIC PET112-RELATED"/>
    <property type="match status" value="1"/>
</dbReference>
<dbReference type="PANTHER" id="PTHR11659:SF2">
    <property type="entry name" value="GLUTAMYL-TRNA(GLN) AMIDOTRANSFERASE SUBUNIT E"/>
    <property type="match status" value="1"/>
</dbReference>
<dbReference type="Pfam" id="PF02938">
    <property type="entry name" value="GAD"/>
    <property type="match status" value="1"/>
</dbReference>
<dbReference type="Pfam" id="PF02934">
    <property type="entry name" value="GatB_N"/>
    <property type="match status" value="1"/>
</dbReference>
<dbReference type="Pfam" id="PF02637">
    <property type="entry name" value="GatB_Yqey"/>
    <property type="match status" value="1"/>
</dbReference>
<dbReference type="SMART" id="SM00845">
    <property type="entry name" value="GatB_Yqey"/>
    <property type="match status" value="1"/>
</dbReference>
<dbReference type="SUPFAM" id="SSF55261">
    <property type="entry name" value="GAD domain-like"/>
    <property type="match status" value="1"/>
</dbReference>
<dbReference type="SUPFAM" id="SSF89095">
    <property type="entry name" value="GatB/YqeY motif"/>
    <property type="match status" value="1"/>
</dbReference>
<dbReference type="SUPFAM" id="SSF55931">
    <property type="entry name" value="Glutamine synthetase/guanido kinase"/>
    <property type="match status" value="1"/>
</dbReference>
<dbReference type="PROSITE" id="PS01234">
    <property type="entry name" value="GATB"/>
    <property type="match status" value="1"/>
</dbReference>
<name>GATE_METAC</name>
<comment type="function">
    <text evidence="1">Allows the formation of correctly charged Gln-tRNA(Gln) through the transamidation of misacylated Glu-tRNA(Gln) in organisms which lack glutaminyl-tRNA synthetase. The reaction takes place in the presence of glutamine and ATP through an activated gamma-phospho-Glu-tRNA(Gln). The GatDE system is specific for glutamate and does not act on aspartate.</text>
</comment>
<comment type="catalytic activity">
    <reaction evidence="1">
        <text>L-glutamyl-tRNA(Gln) + L-glutamine + ATP + H2O = L-glutaminyl-tRNA(Gln) + L-glutamate + ADP + phosphate + H(+)</text>
        <dbReference type="Rhea" id="RHEA:17521"/>
        <dbReference type="Rhea" id="RHEA-COMP:9681"/>
        <dbReference type="Rhea" id="RHEA-COMP:9684"/>
        <dbReference type="ChEBI" id="CHEBI:15377"/>
        <dbReference type="ChEBI" id="CHEBI:15378"/>
        <dbReference type="ChEBI" id="CHEBI:29985"/>
        <dbReference type="ChEBI" id="CHEBI:30616"/>
        <dbReference type="ChEBI" id="CHEBI:43474"/>
        <dbReference type="ChEBI" id="CHEBI:58359"/>
        <dbReference type="ChEBI" id="CHEBI:78520"/>
        <dbReference type="ChEBI" id="CHEBI:78521"/>
        <dbReference type="ChEBI" id="CHEBI:456216"/>
    </reaction>
</comment>
<comment type="subunit">
    <text evidence="1">Heterodimer of GatD and GatE.</text>
</comment>
<comment type="similarity">
    <text evidence="1">Belongs to the GatB/GatE family. GatE subfamily.</text>
</comment>